<evidence type="ECO:0000250" key="1"/>
<evidence type="ECO:0000305" key="2"/>
<accession>Q8RE57</accession>
<gene>
    <name type="primary">metG</name>
    <name type="ordered locus">FN1268</name>
</gene>
<name>SYM_FUSNN</name>
<organism>
    <name type="scientific">Fusobacterium nucleatum subsp. nucleatum (strain ATCC 25586 / DSM 15643 / BCRC 10681 / CIP 101130 / JCM 8532 / KCTC 2640 / LMG 13131 / VPI 4355)</name>
    <dbReference type="NCBI Taxonomy" id="190304"/>
    <lineage>
        <taxon>Bacteria</taxon>
        <taxon>Fusobacteriati</taxon>
        <taxon>Fusobacteriota</taxon>
        <taxon>Fusobacteriia</taxon>
        <taxon>Fusobacteriales</taxon>
        <taxon>Fusobacteriaceae</taxon>
        <taxon>Fusobacterium</taxon>
    </lineage>
</organism>
<sequence>MKKNFFVSTPIYYVNGDPHVGSAYTTIAADVINRYNKAMGMDTHFVTGLDEHGQKVEQAAKQNGFTPQAWTDKMTPNFKNMWAALDIKYDDFIRTTEDRHKKAVKRILDIVNAKGDIYKGEYEGKYCVSCETFFPENQLNGSNKCPDCGKDLTVLKEESYFFKMSKYADALLKHIDEHPDFILPHSRRNEVISFIKQGLQDLSISRNTFSWGIPIDFAPGHITYVWFDALTNYITSAGFENDENKFDKFWNNSRVVHLIGKDIIRFHAIIWPCMLLSAGIKLPDSIVAHGWWTSEGEKMSKSRGNVVNPYDEIKKYGVDAFRYYLLREANFGTDGDYSTKGIIGRLNSDLANDLGNLLNRTLGMYKKYFNGTIVSSSTVEPIDDEIKSMFNDVVKDVEKYMYLFEFSRALETIWKFISRLNKYIDETMPWTLAKNEAKKARLAAVMNILCEGLYKIAFLIAPYMPESAQKISNQLGIDKDITNLKFDDIKEWSIFKEGHKLGEASPIFPRIEIEKEEIVETKKELKIENPVDIKEFNKIEIKVVEILDVDKVEGADKLLKFKVFDGEFERQIISGLAKFYPDFKKLISEKVLAVVNLKFTKLKGEISQGMLLTTEDKNGVSLIKIDKTVEAGAIVS</sequence>
<dbReference type="EC" id="6.1.1.10"/>
<dbReference type="EMBL" id="AE009951">
    <property type="protein sequence ID" value="AAL95464.1"/>
    <property type="molecule type" value="Genomic_DNA"/>
</dbReference>
<dbReference type="RefSeq" id="NP_604165.1">
    <property type="nucleotide sequence ID" value="NC_003454.1"/>
</dbReference>
<dbReference type="RefSeq" id="WP_011017027.1">
    <property type="nucleotide sequence ID" value="NZ_CP028101.1"/>
</dbReference>
<dbReference type="SMR" id="Q8RE57"/>
<dbReference type="FunCoup" id="Q8RE57">
    <property type="interactions" value="340"/>
</dbReference>
<dbReference type="STRING" id="190304.FN1268"/>
<dbReference type="PaxDb" id="190304-FN1268"/>
<dbReference type="EnsemblBacteria" id="AAL95464">
    <property type="protein sequence ID" value="AAL95464"/>
    <property type="gene ID" value="FN1268"/>
</dbReference>
<dbReference type="GeneID" id="79784244"/>
<dbReference type="KEGG" id="fnu:FN1268"/>
<dbReference type="PATRIC" id="fig|190304.8.peg.1833"/>
<dbReference type="eggNOG" id="COG0073">
    <property type="taxonomic scope" value="Bacteria"/>
</dbReference>
<dbReference type="eggNOG" id="COG0143">
    <property type="taxonomic scope" value="Bacteria"/>
</dbReference>
<dbReference type="HOGENOM" id="CLU_009710_9_4_0"/>
<dbReference type="InParanoid" id="Q8RE57"/>
<dbReference type="BioCyc" id="FNUC190304:G1FZS-1844-MONOMER"/>
<dbReference type="Proteomes" id="UP000002521">
    <property type="component" value="Chromosome"/>
</dbReference>
<dbReference type="GO" id="GO:0005737">
    <property type="term" value="C:cytoplasm"/>
    <property type="evidence" value="ECO:0007669"/>
    <property type="project" value="UniProtKB-SubCell"/>
</dbReference>
<dbReference type="GO" id="GO:0005524">
    <property type="term" value="F:ATP binding"/>
    <property type="evidence" value="ECO:0007669"/>
    <property type="project" value="UniProtKB-UniRule"/>
</dbReference>
<dbReference type="GO" id="GO:0046872">
    <property type="term" value="F:metal ion binding"/>
    <property type="evidence" value="ECO:0007669"/>
    <property type="project" value="UniProtKB-KW"/>
</dbReference>
<dbReference type="GO" id="GO:0004825">
    <property type="term" value="F:methionine-tRNA ligase activity"/>
    <property type="evidence" value="ECO:0000318"/>
    <property type="project" value="GO_Central"/>
</dbReference>
<dbReference type="GO" id="GO:0000049">
    <property type="term" value="F:tRNA binding"/>
    <property type="evidence" value="ECO:0007669"/>
    <property type="project" value="UniProtKB-KW"/>
</dbReference>
<dbReference type="GO" id="GO:0006431">
    <property type="term" value="P:methionyl-tRNA aminoacylation"/>
    <property type="evidence" value="ECO:0000318"/>
    <property type="project" value="GO_Central"/>
</dbReference>
<dbReference type="CDD" id="cd07957">
    <property type="entry name" value="Anticodon_Ia_Met"/>
    <property type="match status" value="1"/>
</dbReference>
<dbReference type="CDD" id="cd00814">
    <property type="entry name" value="MetRS_core"/>
    <property type="match status" value="1"/>
</dbReference>
<dbReference type="CDD" id="cd02800">
    <property type="entry name" value="tRNA_bind_EcMetRS_like"/>
    <property type="match status" value="1"/>
</dbReference>
<dbReference type="FunFam" id="1.10.730.10:FF:000026">
    <property type="entry name" value="Methionine--tRNA ligase"/>
    <property type="match status" value="1"/>
</dbReference>
<dbReference type="FunFam" id="2.170.220.10:FF:000002">
    <property type="entry name" value="Methionine--tRNA ligase"/>
    <property type="match status" value="1"/>
</dbReference>
<dbReference type="FunFam" id="2.40.50.140:FF:000042">
    <property type="entry name" value="Methionine--tRNA ligase"/>
    <property type="match status" value="1"/>
</dbReference>
<dbReference type="Gene3D" id="2.170.220.10">
    <property type="match status" value="1"/>
</dbReference>
<dbReference type="Gene3D" id="3.40.50.620">
    <property type="entry name" value="HUPs"/>
    <property type="match status" value="1"/>
</dbReference>
<dbReference type="Gene3D" id="1.10.730.10">
    <property type="entry name" value="Isoleucyl-tRNA Synthetase, Domain 1"/>
    <property type="match status" value="1"/>
</dbReference>
<dbReference type="Gene3D" id="2.40.50.140">
    <property type="entry name" value="Nucleic acid-binding proteins"/>
    <property type="match status" value="1"/>
</dbReference>
<dbReference type="HAMAP" id="MF_01228">
    <property type="entry name" value="Met_tRNA_synth_type2"/>
    <property type="match status" value="1"/>
</dbReference>
<dbReference type="InterPro" id="IPR041872">
    <property type="entry name" value="Anticodon_Met"/>
</dbReference>
<dbReference type="InterPro" id="IPR004495">
    <property type="entry name" value="Met-tRNA-synth_bsu_C"/>
</dbReference>
<dbReference type="InterPro" id="IPR014758">
    <property type="entry name" value="Met-tRNA_synth"/>
</dbReference>
<dbReference type="InterPro" id="IPR023457">
    <property type="entry name" value="Met-tRNA_synth_2"/>
</dbReference>
<dbReference type="InterPro" id="IPR015413">
    <property type="entry name" value="Methionyl/Leucyl_tRNA_Synth"/>
</dbReference>
<dbReference type="InterPro" id="IPR033911">
    <property type="entry name" value="MetRS_core"/>
</dbReference>
<dbReference type="InterPro" id="IPR012340">
    <property type="entry name" value="NA-bd_OB-fold"/>
</dbReference>
<dbReference type="InterPro" id="IPR014729">
    <property type="entry name" value="Rossmann-like_a/b/a_fold"/>
</dbReference>
<dbReference type="InterPro" id="IPR002547">
    <property type="entry name" value="tRNA-bd_dom"/>
</dbReference>
<dbReference type="InterPro" id="IPR009080">
    <property type="entry name" value="tRNAsynth_Ia_anticodon-bd"/>
</dbReference>
<dbReference type="NCBIfam" id="TIGR00398">
    <property type="entry name" value="metG"/>
    <property type="match status" value="1"/>
</dbReference>
<dbReference type="NCBIfam" id="NF008900">
    <property type="entry name" value="PRK12267.1"/>
    <property type="match status" value="1"/>
</dbReference>
<dbReference type="PANTHER" id="PTHR43326:SF1">
    <property type="entry name" value="METHIONINE--TRNA LIGASE, MITOCHONDRIAL"/>
    <property type="match status" value="1"/>
</dbReference>
<dbReference type="PANTHER" id="PTHR43326">
    <property type="entry name" value="METHIONYL-TRNA SYNTHETASE"/>
    <property type="match status" value="1"/>
</dbReference>
<dbReference type="Pfam" id="PF19303">
    <property type="entry name" value="Anticodon_3"/>
    <property type="match status" value="1"/>
</dbReference>
<dbReference type="Pfam" id="PF09334">
    <property type="entry name" value="tRNA-synt_1g"/>
    <property type="match status" value="1"/>
</dbReference>
<dbReference type="Pfam" id="PF01588">
    <property type="entry name" value="tRNA_bind"/>
    <property type="match status" value="1"/>
</dbReference>
<dbReference type="PRINTS" id="PR01041">
    <property type="entry name" value="TRNASYNTHMET"/>
</dbReference>
<dbReference type="SUPFAM" id="SSF47323">
    <property type="entry name" value="Anticodon-binding domain of a subclass of class I aminoacyl-tRNA synthetases"/>
    <property type="match status" value="1"/>
</dbReference>
<dbReference type="SUPFAM" id="SSF50249">
    <property type="entry name" value="Nucleic acid-binding proteins"/>
    <property type="match status" value="1"/>
</dbReference>
<dbReference type="SUPFAM" id="SSF52374">
    <property type="entry name" value="Nucleotidylyl transferase"/>
    <property type="match status" value="1"/>
</dbReference>
<dbReference type="PROSITE" id="PS50886">
    <property type="entry name" value="TRBD"/>
    <property type="match status" value="1"/>
</dbReference>
<proteinExistence type="inferred from homology"/>
<reference key="1">
    <citation type="journal article" date="2002" name="J. Bacteriol.">
        <title>Genome sequence and analysis of the oral bacterium Fusobacterium nucleatum strain ATCC 25586.</title>
        <authorList>
            <person name="Kapatral V."/>
            <person name="Anderson I."/>
            <person name="Ivanova N."/>
            <person name="Reznik G."/>
            <person name="Los T."/>
            <person name="Lykidis A."/>
            <person name="Bhattacharyya A."/>
            <person name="Bartman A."/>
            <person name="Gardner W."/>
            <person name="Grechkin G."/>
            <person name="Zhu L."/>
            <person name="Vasieva O."/>
            <person name="Chu L."/>
            <person name="Kogan Y."/>
            <person name="Chaga O."/>
            <person name="Goltsman E."/>
            <person name="Bernal A."/>
            <person name="Larsen N."/>
            <person name="D'Souza M."/>
            <person name="Walunas T."/>
            <person name="Pusch G."/>
            <person name="Haselkorn R."/>
            <person name="Fonstein M."/>
            <person name="Kyrpides N.C."/>
            <person name="Overbeek R."/>
        </authorList>
    </citation>
    <scope>NUCLEOTIDE SEQUENCE [LARGE SCALE GENOMIC DNA]</scope>
    <source>
        <strain>ATCC 25586 / DSM 15643 / BCRC 10681 / CIP 101130 / JCM 8532 / KCTC 2640 / LMG 13131 / VPI 4355</strain>
    </source>
</reference>
<comment type="function">
    <text evidence="1">Is required not only for elongation of protein synthesis but also for the initiation of all mRNA translation through initiator tRNA(fMet) aminoacylation.</text>
</comment>
<comment type="catalytic activity">
    <reaction>
        <text>tRNA(Met) + L-methionine + ATP = L-methionyl-tRNA(Met) + AMP + diphosphate</text>
        <dbReference type="Rhea" id="RHEA:13481"/>
        <dbReference type="Rhea" id="RHEA-COMP:9667"/>
        <dbReference type="Rhea" id="RHEA-COMP:9698"/>
        <dbReference type="ChEBI" id="CHEBI:30616"/>
        <dbReference type="ChEBI" id="CHEBI:33019"/>
        <dbReference type="ChEBI" id="CHEBI:57844"/>
        <dbReference type="ChEBI" id="CHEBI:78442"/>
        <dbReference type="ChEBI" id="CHEBI:78530"/>
        <dbReference type="ChEBI" id="CHEBI:456215"/>
        <dbReference type="EC" id="6.1.1.10"/>
    </reaction>
</comment>
<comment type="cofactor">
    <cofactor evidence="1">
        <name>Zn(2+)</name>
        <dbReference type="ChEBI" id="CHEBI:29105"/>
    </cofactor>
    <text evidence="1">Binds 1 zinc ion per subunit.</text>
</comment>
<comment type="subunit">
    <text evidence="1">Homodimer.</text>
</comment>
<comment type="subcellular location">
    <subcellularLocation>
        <location evidence="1">Cytoplasm</location>
    </subcellularLocation>
</comment>
<comment type="similarity">
    <text evidence="2">Belongs to the class-I aminoacyl-tRNA synthetase family. MetG type 2A subfamily.</text>
</comment>
<feature type="chain" id="PRO_0000139220" description="Methionine--tRNA ligase">
    <location>
        <begin position="1"/>
        <end position="636"/>
    </location>
</feature>
<feature type="domain" description="tRNA-binding">
    <location>
        <begin position="535"/>
        <end position="636"/>
    </location>
</feature>
<feature type="short sequence motif" description="'HIGH' region">
    <location>
        <begin position="12"/>
        <end position="22"/>
    </location>
</feature>
<feature type="short sequence motif" description="'KMSKS' region">
    <location>
        <begin position="298"/>
        <end position="302"/>
    </location>
</feature>
<feature type="binding site" evidence="1">
    <location>
        <position position="127"/>
    </location>
    <ligand>
        <name>Zn(2+)</name>
        <dbReference type="ChEBI" id="CHEBI:29105"/>
    </ligand>
</feature>
<feature type="binding site" evidence="1">
    <location>
        <position position="130"/>
    </location>
    <ligand>
        <name>Zn(2+)</name>
        <dbReference type="ChEBI" id="CHEBI:29105"/>
    </ligand>
</feature>
<feature type="binding site" evidence="1">
    <location>
        <position position="145"/>
    </location>
    <ligand>
        <name>Zn(2+)</name>
        <dbReference type="ChEBI" id="CHEBI:29105"/>
    </ligand>
</feature>
<feature type="binding site" evidence="1">
    <location>
        <position position="148"/>
    </location>
    <ligand>
        <name>Zn(2+)</name>
        <dbReference type="ChEBI" id="CHEBI:29105"/>
    </ligand>
</feature>
<feature type="binding site" evidence="1">
    <location>
        <position position="301"/>
    </location>
    <ligand>
        <name>ATP</name>
        <dbReference type="ChEBI" id="CHEBI:30616"/>
    </ligand>
</feature>
<protein>
    <recommendedName>
        <fullName>Methionine--tRNA ligase</fullName>
        <ecNumber>6.1.1.10</ecNumber>
    </recommendedName>
    <alternativeName>
        <fullName>Methionyl-tRNA synthetase</fullName>
        <shortName>MetRS</shortName>
    </alternativeName>
</protein>
<keyword id="KW-0030">Aminoacyl-tRNA synthetase</keyword>
<keyword id="KW-0067">ATP-binding</keyword>
<keyword id="KW-0963">Cytoplasm</keyword>
<keyword id="KW-0436">Ligase</keyword>
<keyword id="KW-0479">Metal-binding</keyword>
<keyword id="KW-0547">Nucleotide-binding</keyword>
<keyword id="KW-0648">Protein biosynthesis</keyword>
<keyword id="KW-1185">Reference proteome</keyword>
<keyword id="KW-0694">RNA-binding</keyword>
<keyword id="KW-0820">tRNA-binding</keyword>
<keyword id="KW-0862">Zinc</keyword>